<proteinExistence type="inferred from homology"/>
<organism>
    <name type="scientific">Dictyostelium discoideum</name>
    <name type="common">Social amoeba</name>
    <dbReference type="NCBI Taxonomy" id="44689"/>
    <lineage>
        <taxon>Eukaryota</taxon>
        <taxon>Amoebozoa</taxon>
        <taxon>Evosea</taxon>
        <taxon>Eumycetozoa</taxon>
        <taxon>Dictyostelia</taxon>
        <taxon>Dictyosteliales</taxon>
        <taxon>Dictyosteliaceae</taxon>
        <taxon>Dictyostelium</taxon>
    </lineage>
</organism>
<reference key="1">
    <citation type="journal article" date="2005" name="Nature">
        <title>The genome of the social amoeba Dictyostelium discoideum.</title>
        <authorList>
            <person name="Eichinger L."/>
            <person name="Pachebat J.A."/>
            <person name="Gloeckner G."/>
            <person name="Rajandream M.A."/>
            <person name="Sucgang R."/>
            <person name="Berriman M."/>
            <person name="Song J."/>
            <person name="Olsen R."/>
            <person name="Szafranski K."/>
            <person name="Xu Q."/>
            <person name="Tunggal B."/>
            <person name="Kummerfeld S."/>
            <person name="Madera M."/>
            <person name="Konfortov B.A."/>
            <person name="Rivero F."/>
            <person name="Bankier A.T."/>
            <person name="Lehmann R."/>
            <person name="Hamlin N."/>
            <person name="Davies R."/>
            <person name="Gaudet P."/>
            <person name="Fey P."/>
            <person name="Pilcher K."/>
            <person name="Chen G."/>
            <person name="Saunders D."/>
            <person name="Sodergren E.J."/>
            <person name="Davis P."/>
            <person name="Kerhornou A."/>
            <person name="Nie X."/>
            <person name="Hall N."/>
            <person name="Anjard C."/>
            <person name="Hemphill L."/>
            <person name="Bason N."/>
            <person name="Farbrother P."/>
            <person name="Desany B."/>
            <person name="Just E."/>
            <person name="Morio T."/>
            <person name="Rost R."/>
            <person name="Churcher C.M."/>
            <person name="Cooper J."/>
            <person name="Haydock S."/>
            <person name="van Driessche N."/>
            <person name="Cronin A."/>
            <person name="Goodhead I."/>
            <person name="Muzny D.M."/>
            <person name="Mourier T."/>
            <person name="Pain A."/>
            <person name="Lu M."/>
            <person name="Harper D."/>
            <person name="Lindsay R."/>
            <person name="Hauser H."/>
            <person name="James K.D."/>
            <person name="Quiles M."/>
            <person name="Madan Babu M."/>
            <person name="Saito T."/>
            <person name="Buchrieser C."/>
            <person name="Wardroper A."/>
            <person name="Felder M."/>
            <person name="Thangavelu M."/>
            <person name="Johnson D."/>
            <person name="Knights A."/>
            <person name="Loulseged H."/>
            <person name="Mungall K.L."/>
            <person name="Oliver K."/>
            <person name="Price C."/>
            <person name="Quail M.A."/>
            <person name="Urushihara H."/>
            <person name="Hernandez J."/>
            <person name="Rabbinowitsch E."/>
            <person name="Steffen D."/>
            <person name="Sanders M."/>
            <person name="Ma J."/>
            <person name="Kohara Y."/>
            <person name="Sharp S."/>
            <person name="Simmonds M.N."/>
            <person name="Spiegler S."/>
            <person name="Tivey A."/>
            <person name="Sugano S."/>
            <person name="White B."/>
            <person name="Walker D."/>
            <person name="Woodward J.R."/>
            <person name="Winckler T."/>
            <person name="Tanaka Y."/>
            <person name="Shaulsky G."/>
            <person name="Schleicher M."/>
            <person name="Weinstock G.M."/>
            <person name="Rosenthal A."/>
            <person name="Cox E.C."/>
            <person name="Chisholm R.L."/>
            <person name="Gibbs R.A."/>
            <person name="Loomis W.F."/>
            <person name="Platzer M."/>
            <person name="Kay R.R."/>
            <person name="Williams J.G."/>
            <person name="Dear P.H."/>
            <person name="Noegel A.A."/>
            <person name="Barrell B.G."/>
            <person name="Kuspa A."/>
        </authorList>
    </citation>
    <scope>NUCLEOTIDE SEQUENCE [LARGE SCALE GENOMIC DNA]</scope>
    <source>
        <strain>AX4</strain>
    </source>
</reference>
<feature type="chain" id="PRO_0000330939" description="Cullin-3">
    <location>
        <begin position="1"/>
        <end position="769"/>
    </location>
</feature>
<feature type="domain" description="Cullin neddylation" evidence="4">
    <location>
        <begin position="699"/>
        <end position="761"/>
    </location>
</feature>
<feature type="region of interest" description="Disordered" evidence="6">
    <location>
        <begin position="614"/>
        <end position="655"/>
    </location>
</feature>
<feature type="compositionally biased region" description="Low complexity" evidence="6">
    <location>
        <begin position="618"/>
        <end position="653"/>
    </location>
</feature>
<feature type="cross-link" description="Glycyl lysine isopeptide (Lys-Gly) (interchain with G-Cter in NEDD8)" evidence="2">
    <location>
        <position position="713"/>
    </location>
</feature>
<gene>
    <name type="primary">culC</name>
    <name type="synonym">cul3</name>
    <name type="ORF">DDB_G0284903</name>
</gene>
<name>CUL3_DICDI</name>
<dbReference type="EMBL" id="AAFI02000073">
    <property type="protein sequence ID" value="EAL64915.1"/>
    <property type="molecule type" value="Genomic_DNA"/>
</dbReference>
<dbReference type="RefSeq" id="XP_639922.1">
    <property type="nucleotide sequence ID" value="XM_634830.1"/>
</dbReference>
<dbReference type="SMR" id="Q54NZ5"/>
<dbReference type="FunCoup" id="Q54NZ5">
    <property type="interactions" value="824"/>
</dbReference>
<dbReference type="STRING" id="44689.Q54NZ5"/>
<dbReference type="GlyGen" id="Q54NZ5">
    <property type="glycosylation" value="1 site"/>
</dbReference>
<dbReference type="PaxDb" id="44689-DDB0266742"/>
<dbReference type="EnsemblProtists" id="EAL64915">
    <property type="protein sequence ID" value="EAL64915"/>
    <property type="gene ID" value="DDB_G0284903"/>
</dbReference>
<dbReference type="GeneID" id="8624834"/>
<dbReference type="KEGG" id="ddi:DDB_G0284903"/>
<dbReference type="dictyBase" id="DDB_G0284903">
    <property type="gene designation" value="culC"/>
</dbReference>
<dbReference type="VEuPathDB" id="AmoebaDB:DDB_G0284903"/>
<dbReference type="eggNOG" id="KOG2166">
    <property type="taxonomic scope" value="Eukaryota"/>
</dbReference>
<dbReference type="HOGENOM" id="CLU_004747_7_1_1"/>
<dbReference type="InParanoid" id="Q54NZ5"/>
<dbReference type="OMA" id="MFKDMTI"/>
<dbReference type="PhylomeDB" id="Q54NZ5"/>
<dbReference type="Reactome" id="R-DDI-4641258">
    <property type="pathway name" value="Degradation of DVL"/>
</dbReference>
<dbReference type="Reactome" id="R-DDI-5632684">
    <property type="pathway name" value="Hedgehog 'on' state"/>
</dbReference>
<dbReference type="Reactome" id="R-DDI-5658442">
    <property type="pathway name" value="Regulation of RAS by GAPs"/>
</dbReference>
<dbReference type="Reactome" id="R-DDI-8951664">
    <property type="pathway name" value="Neddylation"/>
</dbReference>
<dbReference type="Reactome" id="R-DDI-9013418">
    <property type="pathway name" value="RHOBTB2 GTPase cycle"/>
</dbReference>
<dbReference type="Reactome" id="R-DDI-9013422">
    <property type="pathway name" value="RHOBTB1 GTPase cycle"/>
</dbReference>
<dbReference type="Reactome" id="R-DDI-9706019">
    <property type="pathway name" value="RHOBTB3 ATPase cycle"/>
</dbReference>
<dbReference type="Reactome" id="R-DDI-9755511">
    <property type="pathway name" value="KEAP1-NFE2L2 pathway"/>
</dbReference>
<dbReference type="Reactome" id="R-DDI-983168">
    <property type="pathway name" value="Antigen processing: Ubiquitination &amp; Proteasome degradation"/>
</dbReference>
<dbReference type="UniPathway" id="UPA00143"/>
<dbReference type="PRO" id="PR:Q54NZ5"/>
<dbReference type="Proteomes" id="UP000002195">
    <property type="component" value="Chromosome 4"/>
</dbReference>
<dbReference type="GO" id="GO:0031463">
    <property type="term" value="C:Cul3-RING ubiquitin ligase complex"/>
    <property type="evidence" value="ECO:0000318"/>
    <property type="project" value="GO_Central"/>
</dbReference>
<dbReference type="GO" id="GO:0005634">
    <property type="term" value="C:nucleus"/>
    <property type="evidence" value="ECO:0007669"/>
    <property type="project" value="UniProtKB-SubCell"/>
</dbReference>
<dbReference type="GO" id="GO:0031625">
    <property type="term" value="F:ubiquitin protein ligase binding"/>
    <property type="evidence" value="ECO:0000318"/>
    <property type="project" value="GO_Central"/>
</dbReference>
<dbReference type="GO" id="GO:0016567">
    <property type="term" value="P:protein ubiquitination"/>
    <property type="evidence" value="ECO:0000318"/>
    <property type="project" value="GO_Central"/>
</dbReference>
<dbReference type="GO" id="GO:0006511">
    <property type="term" value="P:ubiquitin-dependent protein catabolic process"/>
    <property type="evidence" value="ECO:0007669"/>
    <property type="project" value="InterPro"/>
</dbReference>
<dbReference type="FunFam" id="1.10.10.10:FF:000091">
    <property type="entry name" value="Cullin 3"/>
    <property type="match status" value="1"/>
</dbReference>
<dbReference type="FunFam" id="1.20.1310.10:FF:000001">
    <property type="entry name" value="Cullin 3"/>
    <property type="match status" value="1"/>
</dbReference>
<dbReference type="FunFam" id="1.20.1310.10:FF:000006">
    <property type="entry name" value="Cullin 3"/>
    <property type="match status" value="1"/>
</dbReference>
<dbReference type="FunFam" id="1.20.1310.10:FF:000004">
    <property type="entry name" value="Cullin 4B"/>
    <property type="match status" value="1"/>
</dbReference>
<dbReference type="FunFam" id="1.20.1310.10:FF:000002">
    <property type="entry name" value="cullin-3 isoform X1"/>
    <property type="match status" value="1"/>
</dbReference>
<dbReference type="FunFam" id="3.30.230.130:FF:000030">
    <property type="entry name" value="Cullin-4"/>
    <property type="match status" value="1"/>
</dbReference>
<dbReference type="Gene3D" id="1.20.1310.10">
    <property type="entry name" value="Cullin Repeats"/>
    <property type="match status" value="4"/>
</dbReference>
<dbReference type="Gene3D" id="3.30.230.130">
    <property type="entry name" value="Cullin, Chain C, Domain 2"/>
    <property type="match status" value="1"/>
</dbReference>
<dbReference type="Gene3D" id="1.10.10.10">
    <property type="entry name" value="Winged helix-like DNA-binding domain superfamily/Winged helix DNA-binding domain"/>
    <property type="match status" value="1"/>
</dbReference>
<dbReference type="InterPro" id="IPR045093">
    <property type="entry name" value="Cullin"/>
</dbReference>
<dbReference type="InterPro" id="IPR016157">
    <property type="entry name" value="Cullin_CS"/>
</dbReference>
<dbReference type="InterPro" id="IPR016158">
    <property type="entry name" value="Cullin_homology"/>
</dbReference>
<dbReference type="InterPro" id="IPR036317">
    <property type="entry name" value="Cullin_homology_sf"/>
</dbReference>
<dbReference type="InterPro" id="IPR001373">
    <property type="entry name" value="Cullin_N"/>
</dbReference>
<dbReference type="InterPro" id="IPR019559">
    <property type="entry name" value="Cullin_neddylation_domain"/>
</dbReference>
<dbReference type="InterPro" id="IPR016159">
    <property type="entry name" value="Cullin_repeat-like_dom_sf"/>
</dbReference>
<dbReference type="InterPro" id="IPR036388">
    <property type="entry name" value="WH-like_DNA-bd_sf"/>
</dbReference>
<dbReference type="InterPro" id="IPR036390">
    <property type="entry name" value="WH_DNA-bd_sf"/>
</dbReference>
<dbReference type="PANTHER" id="PTHR11932">
    <property type="entry name" value="CULLIN"/>
    <property type="match status" value="1"/>
</dbReference>
<dbReference type="Pfam" id="PF00888">
    <property type="entry name" value="Cullin"/>
    <property type="match status" value="1"/>
</dbReference>
<dbReference type="Pfam" id="PF10557">
    <property type="entry name" value="Cullin_Nedd8"/>
    <property type="match status" value="1"/>
</dbReference>
<dbReference type="SMART" id="SM00182">
    <property type="entry name" value="CULLIN"/>
    <property type="match status" value="1"/>
</dbReference>
<dbReference type="SMART" id="SM00884">
    <property type="entry name" value="Cullin_Nedd8"/>
    <property type="match status" value="1"/>
</dbReference>
<dbReference type="SUPFAM" id="SSF75632">
    <property type="entry name" value="Cullin homology domain"/>
    <property type="match status" value="1"/>
</dbReference>
<dbReference type="SUPFAM" id="SSF74788">
    <property type="entry name" value="Cullin repeat-like"/>
    <property type="match status" value="1"/>
</dbReference>
<dbReference type="SUPFAM" id="SSF46785">
    <property type="entry name" value="Winged helix' DNA-binding domain"/>
    <property type="match status" value="1"/>
</dbReference>
<dbReference type="PROSITE" id="PS01256">
    <property type="entry name" value="CULLIN_1"/>
    <property type="match status" value="1"/>
</dbReference>
<dbReference type="PROSITE" id="PS50069">
    <property type="entry name" value="CULLIN_2"/>
    <property type="match status" value="1"/>
</dbReference>
<evidence type="ECO:0000250" key="1"/>
<evidence type="ECO:0000250" key="2">
    <source>
        <dbReference type="UniProtKB" id="Q13616"/>
    </source>
</evidence>
<evidence type="ECO:0000250" key="3">
    <source>
        <dbReference type="UniProtKB" id="Q17391"/>
    </source>
</evidence>
<evidence type="ECO:0000255" key="4"/>
<evidence type="ECO:0000255" key="5">
    <source>
        <dbReference type="PROSITE-ProRule" id="PRU00330"/>
    </source>
</evidence>
<evidence type="ECO:0000256" key="6">
    <source>
        <dbReference type="SAM" id="MobiDB-lite"/>
    </source>
</evidence>
<protein>
    <recommendedName>
        <fullName>Cullin-3</fullName>
        <shortName>CUL-3</shortName>
    </recommendedName>
    <alternativeName>
        <fullName>Cullin-C</fullName>
    </alternativeName>
</protein>
<keyword id="KW-1017">Isopeptide bond</keyword>
<keyword id="KW-0539">Nucleus</keyword>
<keyword id="KW-1185">Reference proteome</keyword>
<keyword id="KW-0832">Ubl conjugation</keyword>
<keyword id="KW-0833">Ubl conjugation pathway</keyword>
<accession>Q54NZ5</accession>
<comment type="function">
    <text evidence="1">Probable core component of cullin-based SCF-like E3 ubiquitin-protein ligase complexes which mediate the ubiquitination and subsequent proteasomal degradation of target proteins. The E3 ubiquitin-protein ligase activity of the complex is dependent on the neddylation of the cullin subunit (By similarity).</text>
</comment>
<comment type="pathway">
    <text>Protein modification; protein ubiquitination.</text>
</comment>
<comment type="subcellular location">
    <subcellularLocation>
        <location evidence="1">Nucleus</location>
    </subcellularLocation>
</comment>
<comment type="PTM">
    <text evidence="3">Neddylated. Deneddylated via its interaction with the COP9 signalosome (CSN) complex.</text>
</comment>
<comment type="similarity">
    <text evidence="5">Belongs to the cullin family.</text>
</comment>
<sequence length="769" mass="88886">MMAKPNGKIQFKNLQSHGVLADPDFPKRTWKLLKTAMRQIHQQNASNLSFEELYRNGYNMVLQKHGDLLYNNLKKMVDKHLKAVAKTVSESIDEKFLLELNSSWINHKTSMLMIRDILMYMDRNYVKQNNLSSVFDLGLYLFRDNVAHCSTIKDRLLNTLLSMVQKEREGEVIDRILIKNIVQMLIDLGVNSKNVYIEDFEKPLLLKTSSHYQAQSQTLIQTCSCPDYMKKVEICLKEELERVSHYLDSSSEPKLKEVCEKQLISNHMRTLIDMENSGLISMLKDDKIEDLKRMYNLFSRVSDGLNLMKDVISSYVKEIGRGIVMDEEKTKESGTYFQSLLDLKDKYDNLLQNALYNDKQFIHSIQQAFEYFINLNPKSPEYISLFIDEKLKKGLKGVSEEEVDIILDKILMLFRLIQEKDVFEKYYKQHLAKRLLLGRSISDDAERNMIAKLKTECGYQFTSKLEGMFTDMRLSQDTMSGFKTYIQNLKKALPIDLNVHVLTTGFWPTQNTANCNLPREILLCCEAFKSYYLSNHNGRLLLWQTNMGTAEIKANFPSKSHELQVSSYQMVILLLFNDQSKLTFKEIADQTGIPTIDLKRNLLALTNPKNKILDRELPSTTSSTTTTTTTATSSSTSTSPSSSSSSISTPTPSKSIDESDVFAFNTKFKSKLFRVKVMAVVQKETPVEEKETRDKVDEDRKHQIEASIVRIMKARKTLEHSNLVSEVIKQLQSRFVPNPVIVKKRIESLIEREYLERSKQDRKIYNYMA</sequence>